<keyword id="KW-0169">Cobalamin biosynthesis</keyword>
<keyword id="KW-0328">Glycosyltransferase</keyword>
<keyword id="KW-0808">Transferase</keyword>
<organism>
    <name type="scientific">Pseudomonas putida (strain W619)</name>
    <dbReference type="NCBI Taxonomy" id="390235"/>
    <lineage>
        <taxon>Bacteria</taxon>
        <taxon>Pseudomonadati</taxon>
        <taxon>Pseudomonadota</taxon>
        <taxon>Gammaproteobacteria</taxon>
        <taxon>Pseudomonadales</taxon>
        <taxon>Pseudomonadaceae</taxon>
        <taxon>Pseudomonas</taxon>
    </lineage>
</organism>
<reference key="1">
    <citation type="submission" date="2008-02" db="EMBL/GenBank/DDBJ databases">
        <title>Complete sequence of Pseudomonas putida W619.</title>
        <authorList>
            <person name="Copeland A."/>
            <person name="Lucas S."/>
            <person name="Lapidus A."/>
            <person name="Barry K."/>
            <person name="Detter J.C."/>
            <person name="Glavina del Rio T."/>
            <person name="Dalin E."/>
            <person name="Tice H."/>
            <person name="Pitluck S."/>
            <person name="Chain P."/>
            <person name="Malfatti S."/>
            <person name="Shin M."/>
            <person name="Vergez L."/>
            <person name="Schmutz J."/>
            <person name="Larimer F."/>
            <person name="Land M."/>
            <person name="Hauser L."/>
            <person name="Kyrpides N."/>
            <person name="Kim E."/>
            <person name="Taghavi S."/>
            <person name="Vangronsveld D."/>
            <person name="van der Lelie D."/>
            <person name="Richardson P."/>
        </authorList>
    </citation>
    <scope>NUCLEOTIDE SEQUENCE [LARGE SCALE GENOMIC DNA]</scope>
    <source>
        <strain>W619</strain>
    </source>
</reference>
<comment type="function">
    <text evidence="1">Catalyzes the synthesis of alpha-ribazole-5'-phosphate from nicotinate mononucleotide (NAMN) and 5,6-dimethylbenzimidazole (DMB).</text>
</comment>
<comment type="catalytic activity">
    <reaction evidence="1">
        <text>5,6-dimethylbenzimidazole + nicotinate beta-D-ribonucleotide = alpha-ribazole 5'-phosphate + nicotinate + H(+)</text>
        <dbReference type="Rhea" id="RHEA:11196"/>
        <dbReference type="ChEBI" id="CHEBI:15378"/>
        <dbReference type="ChEBI" id="CHEBI:15890"/>
        <dbReference type="ChEBI" id="CHEBI:32544"/>
        <dbReference type="ChEBI" id="CHEBI:57502"/>
        <dbReference type="ChEBI" id="CHEBI:57918"/>
        <dbReference type="EC" id="2.4.2.21"/>
    </reaction>
</comment>
<comment type="pathway">
    <text evidence="1">Nucleoside biosynthesis; alpha-ribazole biosynthesis; alpha-ribazole from 5,6-dimethylbenzimidazole: step 1/2.</text>
</comment>
<comment type="similarity">
    <text evidence="1">Belongs to the CobT family.</text>
</comment>
<name>COBT_PSEPW</name>
<proteinExistence type="inferred from homology"/>
<evidence type="ECO:0000255" key="1">
    <source>
        <dbReference type="HAMAP-Rule" id="MF_00230"/>
    </source>
</evidence>
<dbReference type="EC" id="2.4.2.21" evidence="1"/>
<dbReference type="EMBL" id="CP000949">
    <property type="protein sequence ID" value="ACA71743.1"/>
    <property type="molecule type" value="Genomic_DNA"/>
</dbReference>
<dbReference type="SMR" id="B1J1N8"/>
<dbReference type="STRING" id="390235.PputW619_1238"/>
<dbReference type="KEGG" id="ppw:PputW619_1238"/>
<dbReference type="eggNOG" id="COG2038">
    <property type="taxonomic scope" value="Bacteria"/>
</dbReference>
<dbReference type="HOGENOM" id="CLU_002982_0_1_6"/>
<dbReference type="OrthoDB" id="9781491at2"/>
<dbReference type="UniPathway" id="UPA00061">
    <property type="reaction ID" value="UER00516"/>
</dbReference>
<dbReference type="GO" id="GO:0008939">
    <property type="term" value="F:nicotinate-nucleotide-dimethylbenzimidazole phosphoribosyltransferase activity"/>
    <property type="evidence" value="ECO:0007669"/>
    <property type="project" value="UniProtKB-UniRule"/>
</dbReference>
<dbReference type="GO" id="GO:0009236">
    <property type="term" value="P:cobalamin biosynthetic process"/>
    <property type="evidence" value="ECO:0007669"/>
    <property type="project" value="UniProtKB-KW"/>
</dbReference>
<dbReference type="CDD" id="cd02439">
    <property type="entry name" value="DMB-PRT_CobT"/>
    <property type="match status" value="1"/>
</dbReference>
<dbReference type="FunFam" id="3.40.50.10210:FF:000001">
    <property type="entry name" value="Nicotinate-nucleotide--dimethylbenzimidazole phosphoribosyltransferase"/>
    <property type="match status" value="1"/>
</dbReference>
<dbReference type="Gene3D" id="1.10.1610.10">
    <property type="match status" value="1"/>
</dbReference>
<dbReference type="Gene3D" id="3.40.50.10210">
    <property type="match status" value="1"/>
</dbReference>
<dbReference type="HAMAP" id="MF_00230">
    <property type="entry name" value="CobT"/>
    <property type="match status" value="1"/>
</dbReference>
<dbReference type="InterPro" id="IPR003200">
    <property type="entry name" value="Nict_dMeBzImd_PRibTrfase"/>
</dbReference>
<dbReference type="InterPro" id="IPR017846">
    <property type="entry name" value="Nict_dMeBzImd_PRibTrfase_bact"/>
</dbReference>
<dbReference type="InterPro" id="IPR023195">
    <property type="entry name" value="Nict_dMeBzImd_PRibTrfase_N"/>
</dbReference>
<dbReference type="InterPro" id="IPR036087">
    <property type="entry name" value="Nict_dMeBzImd_PRibTrfase_sf"/>
</dbReference>
<dbReference type="NCBIfam" id="TIGR03160">
    <property type="entry name" value="cobT_DBIPRT"/>
    <property type="match status" value="1"/>
</dbReference>
<dbReference type="NCBIfam" id="NF000996">
    <property type="entry name" value="PRK00105.1"/>
    <property type="match status" value="1"/>
</dbReference>
<dbReference type="PANTHER" id="PTHR43463">
    <property type="entry name" value="NICOTINATE-NUCLEOTIDE--DIMETHYLBENZIMIDAZOLE PHOSPHORIBOSYLTRANSFERASE"/>
    <property type="match status" value="1"/>
</dbReference>
<dbReference type="PANTHER" id="PTHR43463:SF1">
    <property type="entry name" value="NICOTINATE-NUCLEOTIDE--DIMETHYLBENZIMIDAZOLE PHOSPHORIBOSYLTRANSFERASE"/>
    <property type="match status" value="1"/>
</dbReference>
<dbReference type="Pfam" id="PF02277">
    <property type="entry name" value="DBI_PRT"/>
    <property type="match status" value="1"/>
</dbReference>
<dbReference type="SUPFAM" id="SSF52733">
    <property type="entry name" value="Nicotinate mononucleotide:5,6-dimethylbenzimidazole phosphoribosyltransferase (CobT)"/>
    <property type="match status" value="1"/>
</dbReference>
<sequence length="351" mass="36222">MNPTWWRDACQPLDTAAMDQARARQQQLTKPAGSLGQLEALAVHLAGLQGVERPNLDQVAITIFAGDHGVVEEGISAYPQAVTGQMLRNFVGGGAAISVLARQLQASLEVVDLGTIDPHLELPGVRHLRLGSGTANFARQPAMTEVQLRSALQAGRDSVLRAAQSGAQLFIGGEMGIGNTTAAAALASTLLGCPARELSGPGTGLDTAGVRHKAEVIERALVLHGLRADDPLQALGCVGGFEIAALAGAYLACAQQGIAVLVDGFICSVAALVAVRLNPQCRAWLLFAHQGAEPGHKALLDALQAEPLLALGLRLGEGSGAALAVPLLRLACVLHGQMATFAEAAVADRPV</sequence>
<accession>B1J1N8</accession>
<protein>
    <recommendedName>
        <fullName evidence="1">Nicotinate-nucleotide--dimethylbenzimidazole phosphoribosyltransferase</fullName>
        <shortName evidence="1">NN:DBI PRT</shortName>
        <ecNumber evidence="1">2.4.2.21</ecNumber>
    </recommendedName>
    <alternativeName>
        <fullName evidence="1">N(1)-alpha-phosphoribosyltransferase</fullName>
    </alternativeName>
</protein>
<feature type="chain" id="PRO_1000100470" description="Nicotinate-nucleotide--dimethylbenzimidazole phosphoribosyltransferase">
    <location>
        <begin position="1"/>
        <end position="351"/>
    </location>
</feature>
<feature type="active site" description="Proton acceptor" evidence="1">
    <location>
        <position position="317"/>
    </location>
</feature>
<gene>
    <name evidence="1" type="primary">cobT</name>
    <name type="ordered locus">PputW619_1238</name>
</gene>